<dbReference type="EMBL" id="CP000958">
    <property type="protein sequence ID" value="ACA90045.1"/>
    <property type="molecule type" value="Genomic_DNA"/>
</dbReference>
<dbReference type="RefSeq" id="WP_006476704.1">
    <property type="nucleotide sequence ID" value="NC_010508.1"/>
</dbReference>
<dbReference type="SMR" id="B1JX26"/>
<dbReference type="GeneID" id="83047658"/>
<dbReference type="KEGG" id="bcm:Bcenmc03_0867"/>
<dbReference type="HOGENOM" id="CLU_072144_1_0_4"/>
<dbReference type="Proteomes" id="UP000002169">
    <property type="component" value="Chromosome 1"/>
</dbReference>
<dbReference type="GO" id="GO:0005737">
    <property type="term" value="C:cytoplasm"/>
    <property type="evidence" value="ECO:0007669"/>
    <property type="project" value="UniProtKB-SubCell"/>
</dbReference>
<dbReference type="GO" id="GO:0005525">
    <property type="term" value="F:GTP binding"/>
    <property type="evidence" value="ECO:0007669"/>
    <property type="project" value="UniProtKB-KW"/>
</dbReference>
<dbReference type="GO" id="GO:0003924">
    <property type="term" value="F:GTPase activity"/>
    <property type="evidence" value="ECO:0007669"/>
    <property type="project" value="InterPro"/>
</dbReference>
<dbReference type="GO" id="GO:0016151">
    <property type="term" value="F:nickel cation binding"/>
    <property type="evidence" value="ECO:0007669"/>
    <property type="project" value="UniProtKB-UniRule"/>
</dbReference>
<dbReference type="GO" id="GO:0043419">
    <property type="term" value="P:urea catabolic process"/>
    <property type="evidence" value="ECO:0007669"/>
    <property type="project" value="InterPro"/>
</dbReference>
<dbReference type="CDD" id="cd05540">
    <property type="entry name" value="UreG"/>
    <property type="match status" value="1"/>
</dbReference>
<dbReference type="FunFam" id="3.40.50.300:FF:000208">
    <property type="entry name" value="Urease accessory protein UreG"/>
    <property type="match status" value="1"/>
</dbReference>
<dbReference type="Gene3D" id="3.40.50.300">
    <property type="entry name" value="P-loop containing nucleotide triphosphate hydrolases"/>
    <property type="match status" value="1"/>
</dbReference>
<dbReference type="HAMAP" id="MF_01389">
    <property type="entry name" value="UreG"/>
    <property type="match status" value="1"/>
</dbReference>
<dbReference type="InterPro" id="IPR003495">
    <property type="entry name" value="CobW/HypB/UreG_nucleotide-bd"/>
</dbReference>
<dbReference type="InterPro" id="IPR027417">
    <property type="entry name" value="P-loop_NTPase"/>
</dbReference>
<dbReference type="InterPro" id="IPR004400">
    <property type="entry name" value="UreG"/>
</dbReference>
<dbReference type="NCBIfam" id="TIGR00101">
    <property type="entry name" value="ureG"/>
    <property type="match status" value="1"/>
</dbReference>
<dbReference type="PANTHER" id="PTHR31715">
    <property type="entry name" value="UREASE ACCESSORY PROTEIN G"/>
    <property type="match status" value="1"/>
</dbReference>
<dbReference type="PANTHER" id="PTHR31715:SF0">
    <property type="entry name" value="UREASE ACCESSORY PROTEIN G"/>
    <property type="match status" value="1"/>
</dbReference>
<dbReference type="Pfam" id="PF02492">
    <property type="entry name" value="cobW"/>
    <property type="match status" value="1"/>
</dbReference>
<dbReference type="PIRSF" id="PIRSF005624">
    <property type="entry name" value="Ni-bind_GTPase"/>
    <property type="match status" value="1"/>
</dbReference>
<dbReference type="SUPFAM" id="SSF52540">
    <property type="entry name" value="P-loop containing nucleoside triphosphate hydrolases"/>
    <property type="match status" value="1"/>
</dbReference>
<comment type="function">
    <text evidence="1">Facilitates the functional incorporation of the urease nickel metallocenter. This process requires GTP hydrolysis, probably effectuated by UreG.</text>
</comment>
<comment type="subunit">
    <text evidence="1">Homodimer. UreD, UreF and UreG form a complex that acts as a GTP-hydrolysis-dependent molecular chaperone, activating the urease apoprotein by helping to assemble the nickel containing metallocenter of UreC. The UreE protein probably delivers the nickel.</text>
</comment>
<comment type="subcellular location">
    <subcellularLocation>
        <location evidence="1">Cytoplasm</location>
    </subcellularLocation>
</comment>
<comment type="similarity">
    <text evidence="1">Belongs to the SIMIBI class G3E GTPase family. UreG subfamily.</text>
</comment>
<feature type="chain" id="PRO_0000347369" description="Urease accessory protein UreG">
    <location>
        <begin position="1"/>
        <end position="215"/>
    </location>
</feature>
<feature type="binding site" evidence="1">
    <location>
        <begin position="24"/>
        <end position="31"/>
    </location>
    <ligand>
        <name>GTP</name>
        <dbReference type="ChEBI" id="CHEBI:37565"/>
    </ligand>
</feature>
<protein>
    <recommendedName>
        <fullName evidence="1">Urease accessory protein UreG</fullName>
    </recommendedName>
</protein>
<organism>
    <name type="scientific">Burkholderia orbicola (strain MC0-3)</name>
    <dbReference type="NCBI Taxonomy" id="406425"/>
    <lineage>
        <taxon>Bacteria</taxon>
        <taxon>Pseudomonadati</taxon>
        <taxon>Pseudomonadota</taxon>
        <taxon>Betaproteobacteria</taxon>
        <taxon>Burkholderiales</taxon>
        <taxon>Burkholderiaceae</taxon>
        <taxon>Burkholderia</taxon>
        <taxon>Burkholderia cepacia complex</taxon>
        <taxon>Burkholderia orbicola</taxon>
    </lineage>
</organism>
<name>UREG_BURO0</name>
<gene>
    <name evidence="1" type="primary">ureG</name>
    <name type="ordered locus">Bcenmc03_0867</name>
</gene>
<evidence type="ECO:0000255" key="1">
    <source>
        <dbReference type="HAMAP-Rule" id="MF_01389"/>
    </source>
</evidence>
<proteinExistence type="inferred from homology"/>
<reference key="1">
    <citation type="submission" date="2008-02" db="EMBL/GenBank/DDBJ databases">
        <title>Complete sequence of chromosome 1 of Burkholderia cenocepacia MC0-3.</title>
        <authorList>
            <person name="Copeland A."/>
            <person name="Lucas S."/>
            <person name="Lapidus A."/>
            <person name="Barry K."/>
            <person name="Bruce D."/>
            <person name="Goodwin L."/>
            <person name="Glavina del Rio T."/>
            <person name="Dalin E."/>
            <person name="Tice H."/>
            <person name="Pitluck S."/>
            <person name="Chain P."/>
            <person name="Malfatti S."/>
            <person name="Shin M."/>
            <person name="Vergez L."/>
            <person name="Schmutz J."/>
            <person name="Larimer F."/>
            <person name="Land M."/>
            <person name="Hauser L."/>
            <person name="Kyrpides N."/>
            <person name="Mikhailova N."/>
            <person name="Tiedje J."/>
            <person name="Richardson P."/>
        </authorList>
    </citation>
    <scope>NUCLEOTIDE SEQUENCE [LARGE SCALE GENOMIC DNA]</scope>
    <source>
        <strain>MC0-3</strain>
    </source>
</reference>
<keyword id="KW-0143">Chaperone</keyword>
<keyword id="KW-0963">Cytoplasm</keyword>
<keyword id="KW-0342">GTP-binding</keyword>
<keyword id="KW-0996">Nickel insertion</keyword>
<keyword id="KW-0547">Nucleotide-binding</keyword>
<accession>B1JX26</accession>
<sequence length="215" mass="23049">MNAPAPSSVRRTKKLPPLRVGIGGPVGSGKTTLLEMLCKAMRDRYDLVAITNDIYTKEDQRLLTVAGALPEERIMGVETGGCPHTAIREDASINLEAVDRMLARFPDADIVFIESGGDNLAATFSPELSDLTIYVIDVAGGEKIPRKGGPGITKSDLLVINKTDLAPLVGANLDVMASDTRKMRGERPYVMTNLKALDGVADVIAFIEKKGLLTV</sequence>